<name>RL10_CAMJR</name>
<protein>
    <recommendedName>
        <fullName evidence="1">Large ribosomal subunit protein uL10</fullName>
    </recommendedName>
    <alternativeName>
        <fullName evidence="2">50S ribosomal protein L10</fullName>
    </alternativeName>
</protein>
<keyword id="KW-0687">Ribonucleoprotein</keyword>
<keyword id="KW-0689">Ribosomal protein</keyword>
<keyword id="KW-0694">RNA-binding</keyword>
<keyword id="KW-0699">rRNA-binding</keyword>
<organism>
    <name type="scientific">Campylobacter jejuni (strain RM1221)</name>
    <dbReference type="NCBI Taxonomy" id="195099"/>
    <lineage>
        <taxon>Bacteria</taxon>
        <taxon>Pseudomonadati</taxon>
        <taxon>Campylobacterota</taxon>
        <taxon>Epsilonproteobacteria</taxon>
        <taxon>Campylobacterales</taxon>
        <taxon>Campylobacteraceae</taxon>
        <taxon>Campylobacter</taxon>
    </lineage>
</organism>
<dbReference type="EMBL" id="CP000025">
    <property type="protein sequence ID" value="AAW35113.1"/>
    <property type="molecule type" value="Genomic_DNA"/>
</dbReference>
<dbReference type="RefSeq" id="WP_002857585.1">
    <property type="nucleotide sequence ID" value="NC_003912.7"/>
</dbReference>
<dbReference type="SMR" id="Q5HVZ1"/>
<dbReference type="KEGG" id="cjr:CJE0526"/>
<dbReference type="HOGENOM" id="CLU_092227_2_2_7"/>
<dbReference type="GO" id="GO:0015934">
    <property type="term" value="C:large ribosomal subunit"/>
    <property type="evidence" value="ECO:0007669"/>
    <property type="project" value="InterPro"/>
</dbReference>
<dbReference type="GO" id="GO:0070180">
    <property type="term" value="F:large ribosomal subunit rRNA binding"/>
    <property type="evidence" value="ECO:0007669"/>
    <property type="project" value="UniProtKB-UniRule"/>
</dbReference>
<dbReference type="GO" id="GO:0003735">
    <property type="term" value="F:structural constituent of ribosome"/>
    <property type="evidence" value="ECO:0007669"/>
    <property type="project" value="InterPro"/>
</dbReference>
<dbReference type="GO" id="GO:0006412">
    <property type="term" value="P:translation"/>
    <property type="evidence" value="ECO:0007669"/>
    <property type="project" value="UniProtKB-UniRule"/>
</dbReference>
<dbReference type="CDD" id="cd05797">
    <property type="entry name" value="Ribosomal_L10"/>
    <property type="match status" value="1"/>
</dbReference>
<dbReference type="Gene3D" id="3.30.70.1730">
    <property type="match status" value="1"/>
</dbReference>
<dbReference type="Gene3D" id="6.10.250.290">
    <property type="match status" value="1"/>
</dbReference>
<dbReference type="HAMAP" id="MF_00362">
    <property type="entry name" value="Ribosomal_uL10"/>
    <property type="match status" value="1"/>
</dbReference>
<dbReference type="InterPro" id="IPR001790">
    <property type="entry name" value="Ribosomal_uL10"/>
</dbReference>
<dbReference type="InterPro" id="IPR043141">
    <property type="entry name" value="Ribosomal_uL10-like_sf"/>
</dbReference>
<dbReference type="InterPro" id="IPR022973">
    <property type="entry name" value="Ribosomal_uL10_bac"/>
</dbReference>
<dbReference type="InterPro" id="IPR047865">
    <property type="entry name" value="Ribosomal_uL10_bac_type"/>
</dbReference>
<dbReference type="InterPro" id="IPR002363">
    <property type="entry name" value="Ribosomal_uL10_CS_bac"/>
</dbReference>
<dbReference type="NCBIfam" id="NF000955">
    <property type="entry name" value="PRK00099.1-1"/>
    <property type="match status" value="1"/>
</dbReference>
<dbReference type="PANTHER" id="PTHR11560">
    <property type="entry name" value="39S RIBOSOMAL PROTEIN L10, MITOCHONDRIAL"/>
    <property type="match status" value="1"/>
</dbReference>
<dbReference type="Pfam" id="PF00466">
    <property type="entry name" value="Ribosomal_L10"/>
    <property type="match status" value="1"/>
</dbReference>
<dbReference type="SUPFAM" id="SSF160369">
    <property type="entry name" value="Ribosomal protein L10-like"/>
    <property type="match status" value="1"/>
</dbReference>
<dbReference type="PROSITE" id="PS01109">
    <property type="entry name" value="RIBOSOMAL_L10"/>
    <property type="match status" value="1"/>
</dbReference>
<reference key="1">
    <citation type="journal article" date="2005" name="PLoS Biol.">
        <title>Major structural differences and novel potential virulence mechanisms from the genomes of multiple Campylobacter species.</title>
        <authorList>
            <person name="Fouts D.E."/>
            <person name="Mongodin E.F."/>
            <person name="Mandrell R.E."/>
            <person name="Miller W.G."/>
            <person name="Rasko D.A."/>
            <person name="Ravel J."/>
            <person name="Brinkac L.M."/>
            <person name="DeBoy R.T."/>
            <person name="Parker C.T."/>
            <person name="Daugherty S.C."/>
            <person name="Dodson R.J."/>
            <person name="Durkin A.S."/>
            <person name="Madupu R."/>
            <person name="Sullivan S.A."/>
            <person name="Shetty J.U."/>
            <person name="Ayodeji M.A."/>
            <person name="Shvartsbeyn A."/>
            <person name="Schatz M.C."/>
            <person name="Badger J.H."/>
            <person name="Fraser C.M."/>
            <person name="Nelson K.E."/>
        </authorList>
    </citation>
    <scope>NUCLEOTIDE SEQUENCE [LARGE SCALE GENOMIC DNA]</scope>
    <source>
        <strain>RM1221</strain>
    </source>
</reference>
<comment type="function">
    <text evidence="1">Forms part of the ribosomal stalk, playing a central role in the interaction of the ribosome with GTP-bound translation factors.</text>
</comment>
<comment type="subunit">
    <text evidence="1">Part of the ribosomal stalk of the 50S ribosomal subunit. The N-terminus interacts with L11 and the large rRNA to form the base of the stalk. The C-terminus forms an elongated spine to which L12 dimers bind in a sequential fashion forming a multimeric L10(L12)X complex.</text>
</comment>
<comment type="similarity">
    <text evidence="1">Belongs to the universal ribosomal protein uL10 family.</text>
</comment>
<evidence type="ECO:0000255" key="1">
    <source>
        <dbReference type="HAMAP-Rule" id="MF_00362"/>
    </source>
</evidence>
<evidence type="ECO:0000305" key="2"/>
<feature type="chain" id="PRO_0000234839" description="Large ribosomal subunit protein uL10">
    <location>
        <begin position="1"/>
        <end position="159"/>
    </location>
</feature>
<gene>
    <name evidence="1" type="primary">rplJ</name>
    <name type="ordered locus">CJE0526</name>
</gene>
<accession>Q5HVZ1</accession>
<sequence length="159" mass="17685">MTRSEKVEIIAKLEEGFKASEAIVVCNYRGLSTKKLEELRNNARENNVKVQIVKNTLANIALNNSGKTGLVLKDTNIYLWGEDQLGVSKVAAKFEENNDKFEIKTAHIEGEVADVAKVKALAKMPSRNELLAMLLQVWNAPITNFTIGLNALKNKKESE</sequence>
<proteinExistence type="inferred from homology"/>